<organism>
    <name type="scientific">Vibrio atlanticus (strain LGP32)</name>
    <name type="common">Vibrio splendidus (strain Mel32)</name>
    <dbReference type="NCBI Taxonomy" id="575788"/>
    <lineage>
        <taxon>Bacteria</taxon>
        <taxon>Pseudomonadati</taxon>
        <taxon>Pseudomonadota</taxon>
        <taxon>Gammaproteobacteria</taxon>
        <taxon>Vibrionales</taxon>
        <taxon>Vibrionaceae</taxon>
        <taxon>Vibrio</taxon>
    </lineage>
</organism>
<protein>
    <recommendedName>
        <fullName evidence="1">3-phosphoshikimate 1-carboxyvinyltransferase</fullName>
        <ecNumber evidence="1">2.5.1.19</ecNumber>
    </recommendedName>
    <alternativeName>
        <fullName evidence="1">5-enolpyruvylshikimate-3-phosphate synthase</fullName>
        <shortName evidence="1">EPSP synthase</shortName>
        <shortName evidence="1">EPSPS</shortName>
    </alternativeName>
</protein>
<reference key="1">
    <citation type="submission" date="2009-02" db="EMBL/GenBank/DDBJ databases">
        <title>Vibrio splendidus str. LGP32 complete genome.</title>
        <authorList>
            <person name="Mazel D."/>
            <person name="Le Roux F."/>
        </authorList>
    </citation>
    <scope>NUCLEOTIDE SEQUENCE [LARGE SCALE GENOMIC DNA]</scope>
    <source>
        <strain>LGP32</strain>
    </source>
</reference>
<sequence length="426" mass="45802">MESLTLQPIQKVSGEVNLPGSKSVSNRALLLAALSTGTTRLTNLLDSDDIRHMLNALTQLGVDYQLSADKTVCEVTGVGGAFSSDKALELFLGNAGTAMRPLAAALCLGRGEYVLTGEPRMKERPIGHLVTALREAGADVEYLENENYPPLKITGTGLKSGTVSIDGSISSQFLTAFLMAAPLAEGEVTIKIEGELVSKPYIDITLHIMKQFGVDVINNDYQEFVIPTGQSYTAPGDFLVEGDASSASYFLAAAAIKGGEIKVTGIGKNSIQGDIQFADALEKMGAEIEWGDDYVISRCGELKGIDMDYNHIPDAAMTIATTALFAKGTTAIRNVYNWRVKETDRLAAMATELRKVGAEVEEGEDYIIVNPVAELTHAAIDTYDDHRMAMCFSLVALSDTPVTINDPGCTSKTFPDYFDKLKMLSL</sequence>
<evidence type="ECO:0000255" key="1">
    <source>
        <dbReference type="HAMAP-Rule" id="MF_00210"/>
    </source>
</evidence>
<keyword id="KW-0028">Amino-acid biosynthesis</keyword>
<keyword id="KW-0057">Aromatic amino acid biosynthesis</keyword>
<keyword id="KW-0963">Cytoplasm</keyword>
<keyword id="KW-0808">Transferase</keyword>
<feature type="chain" id="PRO_1000124716" description="3-phosphoshikimate 1-carboxyvinyltransferase">
    <location>
        <begin position="1"/>
        <end position="426"/>
    </location>
</feature>
<feature type="active site" description="Proton acceptor" evidence="1">
    <location>
        <position position="314"/>
    </location>
</feature>
<feature type="binding site" evidence="1">
    <location>
        <position position="22"/>
    </location>
    <ligand>
        <name>3-phosphoshikimate</name>
        <dbReference type="ChEBI" id="CHEBI:145989"/>
    </ligand>
</feature>
<feature type="binding site" evidence="1">
    <location>
        <position position="22"/>
    </location>
    <ligand>
        <name>phosphoenolpyruvate</name>
        <dbReference type="ChEBI" id="CHEBI:58702"/>
    </ligand>
</feature>
<feature type="binding site" evidence="1">
    <location>
        <position position="23"/>
    </location>
    <ligand>
        <name>3-phosphoshikimate</name>
        <dbReference type="ChEBI" id="CHEBI:145989"/>
    </ligand>
</feature>
<feature type="binding site" evidence="1">
    <location>
        <position position="27"/>
    </location>
    <ligand>
        <name>3-phosphoshikimate</name>
        <dbReference type="ChEBI" id="CHEBI:145989"/>
    </ligand>
</feature>
<feature type="binding site" evidence="1">
    <location>
        <position position="96"/>
    </location>
    <ligand>
        <name>phosphoenolpyruvate</name>
        <dbReference type="ChEBI" id="CHEBI:58702"/>
    </ligand>
</feature>
<feature type="binding site" evidence="1">
    <location>
        <position position="124"/>
    </location>
    <ligand>
        <name>phosphoenolpyruvate</name>
        <dbReference type="ChEBI" id="CHEBI:58702"/>
    </ligand>
</feature>
<feature type="binding site" evidence="1">
    <location>
        <position position="170"/>
    </location>
    <ligand>
        <name>3-phosphoshikimate</name>
        <dbReference type="ChEBI" id="CHEBI:145989"/>
    </ligand>
</feature>
<feature type="binding site" evidence="1">
    <location>
        <position position="171"/>
    </location>
    <ligand>
        <name>3-phosphoshikimate</name>
        <dbReference type="ChEBI" id="CHEBI:145989"/>
    </ligand>
</feature>
<feature type="binding site" evidence="1">
    <location>
        <position position="172"/>
    </location>
    <ligand>
        <name>3-phosphoshikimate</name>
        <dbReference type="ChEBI" id="CHEBI:145989"/>
    </ligand>
</feature>
<feature type="binding site" evidence="1">
    <location>
        <position position="172"/>
    </location>
    <ligand>
        <name>phosphoenolpyruvate</name>
        <dbReference type="ChEBI" id="CHEBI:58702"/>
    </ligand>
</feature>
<feature type="binding site" evidence="1">
    <location>
        <position position="198"/>
    </location>
    <ligand>
        <name>3-phosphoshikimate</name>
        <dbReference type="ChEBI" id="CHEBI:145989"/>
    </ligand>
</feature>
<feature type="binding site" evidence="1">
    <location>
        <position position="314"/>
    </location>
    <ligand>
        <name>3-phosphoshikimate</name>
        <dbReference type="ChEBI" id="CHEBI:145989"/>
    </ligand>
</feature>
<feature type="binding site" evidence="1">
    <location>
        <position position="337"/>
    </location>
    <ligand>
        <name>3-phosphoshikimate</name>
        <dbReference type="ChEBI" id="CHEBI:145989"/>
    </ligand>
</feature>
<feature type="binding site" evidence="1">
    <location>
        <position position="341"/>
    </location>
    <ligand>
        <name>3-phosphoshikimate</name>
        <dbReference type="ChEBI" id="CHEBI:145989"/>
    </ligand>
</feature>
<feature type="binding site" evidence="1">
    <location>
        <position position="345"/>
    </location>
    <ligand>
        <name>phosphoenolpyruvate</name>
        <dbReference type="ChEBI" id="CHEBI:58702"/>
    </ligand>
</feature>
<feature type="binding site" evidence="1">
    <location>
        <position position="387"/>
    </location>
    <ligand>
        <name>phosphoenolpyruvate</name>
        <dbReference type="ChEBI" id="CHEBI:58702"/>
    </ligand>
</feature>
<feature type="binding site" evidence="1">
    <location>
        <position position="412"/>
    </location>
    <ligand>
        <name>phosphoenolpyruvate</name>
        <dbReference type="ChEBI" id="CHEBI:58702"/>
    </ligand>
</feature>
<accession>B7VM38</accession>
<gene>
    <name evidence="1" type="primary">aroA</name>
    <name type="ordered locus">VS_1079</name>
</gene>
<dbReference type="EC" id="2.5.1.19" evidence="1"/>
<dbReference type="EMBL" id="FM954972">
    <property type="protein sequence ID" value="CAV18185.1"/>
    <property type="molecule type" value="Genomic_DNA"/>
</dbReference>
<dbReference type="SMR" id="B7VM38"/>
<dbReference type="STRING" id="575788.VS_1079"/>
<dbReference type="KEGG" id="vsp:VS_1079"/>
<dbReference type="PATRIC" id="fig|575788.5.peg.2403"/>
<dbReference type="eggNOG" id="COG0128">
    <property type="taxonomic scope" value="Bacteria"/>
</dbReference>
<dbReference type="HOGENOM" id="CLU_024321_0_0_6"/>
<dbReference type="UniPathway" id="UPA00053">
    <property type="reaction ID" value="UER00089"/>
</dbReference>
<dbReference type="Proteomes" id="UP000009100">
    <property type="component" value="Chromosome 1"/>
</dbReference>
<dbReference type="GO" id="GO:0005737">
    <property type="term" value="C:cytoplasm"/>
    <property type="evidence" value="ECO:0007669"/>
    <property type="project" value="UniProtKB-SubCell"/>
</dbReference>
<dbReference type="GO" id="GO:0003866">
    <property type="term" value="F:3-phosphoshikimate 1-carboxyvinyltransferase activity"/>
    <property type="evidence" value="ECO:0007669"/>
    <property type="project" value="UniProtKB-UniRule"/>
</dbReference>
<dbReference type="GO" id="GO:0008652">
    <property type="term" value="P:amino acid biosynthetic process"/>
    <property type="evidence" value="ECO:0007669"/>
    <property type="project" value="UniProtKB-KW"/>
</dbReference>
<dbReference type="GO" id="GO:0009073">
    <property type="term" value="P:aromatic amino acid family biosynthetic process"/>
    <property type="evidence" value="ECO:0007669"/>
    <property type="project" value="UniProtKB-KW"/>
</dbReference>
<dbReference type="GO" id="GO:0009423">
    <property type="term" value="P:chorismate biosynthetic process"/>
    <property type="evidence" value="ECO:0007669"/>
    <property type="project" value="UniProtKB-UniRule"/>
</dbReference>
<dbReference type="CDD" id="cd01556">
    <property type="entry name" value="EPSP_synthase"/>
    <property type="match status" value="1"/>
</dbReference>
<dbReference type="FunFam" id="3.65.10.10:FF:000003">
    <property type="entry name" value="3-phosphoshikimate 1-carboxyvinyltransferase"/>
    <property type="match status" value="1"/>
</dbReference>
<dbReference type="FunFam" id="3.65.10.10:FF:000004">
    <property type="entry name" value="3-phosphoshikimate 1-carboxyvinyltransferase"/>
    <property type="match status" value="1"/>
</dbReference>
<dbReference type="Gene3D" id="3.65.10.10">
    <property type="entry name" value="Enolpyruvate transferase domain"/>
    <property type="match status" value="2"/>
</dbReference>
<dbReference type="HAMAP" id="MF_00210">
    <property type="entry name" value="EPSP_synth"/>
    <property type="match status" value="1"/>
</dbReference>
<dbReference type="InterPro" id="IPR001986">
    <property type="entry name" value="Enolpyruvate_Tfrase_dom"/>
</dbReference>
<dbReference type="InterPro" id="IPR036968">
    <property type="entry name" value="Enolpyruvate_Tfrase_sf"/>
</dbReference>
<dbReference type="InterPro" id="IPR006264">
    <property type="entry name" value="EPSP_synthase"/>
</dbReference>
<dbReference type="InterPro" id="IPR023193">
    <property type="entry name" value="EPSP_synthase_CS"/>
</dbReference>
<dbReference type="InterPro" id="IPR013792">
    <property type="entry name" value="RNA3'P_cycl/enolpyr_Trfase_a/b"/>
</dbReference>
<dbReference type="NCBIfam" id="TIGR01356">
    <property type="entry name" value="aroA"/>
    <property type="match status" value="1"/>
</dbReference>
<dbReference type="PANTHER" id="PTHR21090">
    <property type="entry name" value="AROM/DEHYDROQUINATE SYNTHASE"/>
    <property type="match status" value="1"/>
</dbReference>
<dbReference type="PANTHER" id="PTHR21090:SF5">
    <property type="entry name" value="PENTAFUNCTIONAL AROM POLYPEPTIDE"/>
    <property type="match status" value="1"/>
</dbReference>
<dbReference type="Pfam" id="PF00275">
    <property type="entry name" value="EPSP_synthase"/>
    <property type="match status" value="1"/>
</dbReference>
<dbReference type="PIRSF" id="PIRSF000505">
    <property type="entry name" value="EPSPS"/>
    <property type="match status" value="1"/>
</dbReference>
<dbReference type="SUPFAM" id="SSF55205">
    <property type="entry name" value="EPT/RTPC-like"/>
    <property type="match status" value="1"/>
</dbReference>
<dbReference type="PROSITE" id="PS00104">
    <property type="entry name" value="EPSP_SYNTHASE_1"/>
    <property type="match status" value="1"/>
</dbReference>
<dbReference type="PROSITE" id="PS00885">
    <property type="entry name" value="EPSP_SYNTHASE_2"/>
    <property type="match status" value="1"/>
</dbReference>
<comment type="function">
    <text evidence="1">Catalyzes the transfer of the enolpyruvyl moiety of phosphoenolpyruvate (PEP) to the 5-hydroxyl of shikimate-3-phosphate (S3P) to produce enolpyruvyl shikimate-3-phosphate and inorganic phosphate.</text>
</comment>
<comment type="catalytic activity">
    <reaction evidence="1">
        <text>3-phosphoshikimate + phosphoenolpyruvate = 5-O-(1-carboxyvinyl)-3-phosphoshikimate + phosphate</text>
        <dbReference type="Rhea" id="RHEA:21256"/>
        <dbReference type="ChEBI" id="CHEBI:43474"/>
        <dbReference type="ChEBI" id="CHEBI:57701"/>
        <dbReference type="ChEBI" id="CHEBI:58702"/>
        <dbReference type="ChEBI" id="CHEBI:145989"/>
        <dbReference type="EC" id="2.5.1.19"/>
    </reaction>
    <physiologicalReaction direction="left-to-right" evidence="1">
        <dbReference type="Rhea" id="RHEA:21257"/>
    </physiologicalReaction>
</comment>
<comment type="pathway">
    <text evidence="1">Metabolic intermediate biosynthesis; chorismate biosynthesis; chorismate from D-erythrose 4-phosphate and phosphoenolpyruvate: step 6/7.</text>
</comment>
<comment type="subunit">
    <text evidence="1">Monomer.</text>
</comment>
<comment type="subcellular location">
    <subcellularLocation>
        <location evidence="1">Cytoplasm</location>
    </subcellularLocation>
</comment>
<comment type="similarity">
    <text evidence="1">Belongs to the EPSP synthase family.</text>
</comment>
<proteinExistence type="inferred from homology"/>
<name>AROA_VIBA3</name>